<proteinExistence type="inferred from homology"/>
<gene>
    <name type="primary">nodE</name>
    <name type="synonym">hsnB</name>
</gene>
<organism>
    <name type="scientific">Rhizobium meliloti</name>
    <name type="common">Ensifer meliloti</name>
    <name type="synonym">Sinorhizobium meliloti</name>
    <dbReference type="NCBI Taxonomy" id="382"/>
    <lineage>
        <taxon>Bacteria</taxon>
        <taxon>Pseudomonadati</taxon>
        <taxon>Pseudomonadota</taxon>
        <taxon>Alphaproteobacteria</taxon>
        <taxon>Hyphomicrobiales</taxon>
        <taxon>Rhizobiaceae</taxon>
        <taxon>Sinorhizobium/Ensifer group</taxon>
        <taxon>Sinorhizobium</taxon>
    </lineage>
</organism>
<name>NOE4_RHIML</name>
<feature type="chain" id="PRO_0000180354" description="Nodulation protein E">
    <location>
        <begin position="1"/>
        <end position="401"/>
    </location>
</feature>
<feature type="transmembrane region" description="Helical" evidence="1">
    <location>
        <begin position="328"/>
        <end position="347"/>
    </location>
</feature>
<feature type="domain" description="Ketosynthase family 3 (KS3)" evidence="2">
    <location>
        <begin position="2"/>
        <end position="400"/>
    </location>
</feature>
<feature type="active site" description="For beta-ketoacyl synthase activity" evidence="2">
    <location>
        <position position="161"/>
    </location>
</feature>
<feature type="active site" description="For beta-ketoacyl synthase activity" evidence="2">
    <location>
        <position position="293"/>
    </location>
</feature>
<feature type="active site" description="For beta-ketoacyl synthase activity" evidence="2">
    <location>
        <position position="330"/>
    </location>
</feature>
<evidence type="ECO:0000255" key="1"/>
<evidence type="ECO:0000255" key="2">
    <source>
        <dbReference type="PROSITE-ProRule" id="PRU01348"/>
    </source>
</evidence>
<evidence type="ECO:0000305" key="3"/>
<reference key="1">
    <citation type="journal article" date="1986" name="Cell">
        <title>Organization, structure and symbiotic function of Rhizobium meliloti nodulation genes determining host specificity for alfalfa.</title>
        <authorList>
            <person name="Horvath B."/>
            <person name="Kondorosi E."/>
            <person name="John M."/>
            <person name="Schmidt J."/>
            <person name="Toeroek I."/>
            <person name="Gyoergypal Z."/>
            <person name="Barabas I."/>
            <person name="Wieneke U."/>
            <person name="Schell J."/>
            <person name="Kondorosi A."/>
        </authorList>
    </citation>
    <scope>NUCLEOTIDE SEQUENCE [GENOMIC DNA]</scope>
</reference>
<protein>
    <recommendedName>
        <fullName>Nodulation protein E</fullName>
    </recommendedName>
    <alternativeName>
        <fullName>Host-specificity of nodulation protein B</fullName>
        <ecNumber>2.3.1.-</ecNumber>
    </alternativeName>
</protein>
<keyword id="KW-0997">Cell inner membrane</keyword>
<keyword id="KW-1003">Cell membrane</keyword>
<keyword id="KW-0472">Membrane</keyword>
<keyword id="KW-0536">Nodulation</keyword>
<keyword id="KW-0614">Plasmid</keyword>
<keyword id="KW-0808">Transferase</keyword>
<keyword id="KW-0812">Transmembrane</keyword>
<keyword id="KW-1133">Transmembrane helix</keyword>
<dbReference type="EC" id="2.3.1.-"/>
<dbReference type="EMBL" id="M14052">
    <property type="protein sequence ID" value="AAA26289.1"/>
    <property type="molecule type" value="Genomic_DNA"/>
</dbReference>
<dbReference type="SMR" id="P06231"/>
<dbReference type="GO" id="GO:0005886">
    <property type="term" value="C:plasma membrane"/>
    <property type="evidence" value="ECO:0007669"/>
    <property type="project" value="UniProtKB-SubCell"/>
</dbReference>
<dbReference type="GO" id="GO:0004315">
    <property type="term" value="F:3-oxoacyl-[acyl-carrier-protein] synthase activity"/>
    <property type="evidence" value="ECO:0007669"/>
    <property type="project" value="InterPro"/>
</dbReference>
<dbReference type="GO" id="GO:0006633">
    <property type="term" value="P:fatty acid biosynthetic process"/>
    <property type="evidence" value="ECO:0007669"/>
    <property type="project" value="InterPro"/>
</dbReference>
<dbReference type="CDD" id="cd00834">
    <property type="entry name" value="KAS_I_II"/>
    <property type="match status" value="1"/>
</dbReference>
<dbReference type="Gene3D" id="3.40.47.10">
    <property type="match status" value="1"/>
</dbReference>
<dbReference type="InterPro" id="IPR000794">
    <property type="entry name" value="Beta-ketoacyl_synthase"/>
</dbReference>
<dbReference type="InterPro" id="IPR018201">
    <property type="entry name" value="Ketoacyl_synth_AS"/>
</dbReference>
<dbReference type="InterPro" id="IPR014031">
    <property type="entry name" value="Ketoacyl_synth_C"/>
</dbReference>
<dbReference type="InterPro" id="IPR014030">
    <property type="entry name" value="Ketoacyl_synth_N"/>
</dbReference>
<dbReference type="InterPro" id="IPR020841">
    <property type="entry name" value="PKS_Beta-ketoAc_synthase_dom"/>
</dbReference>
<dbReference type="InterPro" id="IPR016039">
    <property type="entry name" value="Thiolase-like"/>
</dbReference>
<dbReference type="InterPro" id="IPR020615">
    <property type="entry name" value="Thiolase_acyl_enz_int_AS"/>
</dbReference>
<dbReference type="NCBIfam" id="NF005589">
    <property type="entry name" value="PRK07314.1"/>
    <property type="match status" value="1"/>
</dbReference>
<dbReference type="PANTHER" id="PTHR11712:SF352">
    <property type="entry name" value="3-OXOACYL-[ACYL-CARRIER-PROTEIN] SYNTHASE"/>
    <property type="match status" value="1"/>
</dbReference>
<dbReference type="PANTHER" id="PTHR11712">
    <property type="entry name" value="POLYKETIDE SYNTHASE-RELATED"/>
    <property type="match status" value="1"/>
</dbReference>
<dbReference type="Pfam" id="PF00109">
    <property type="entry name" value="ketoacyl-synt"/>
    <property type="match status" value="1"/>
</dbReference>
<dbReference type="Pfam" id="PF02801">
    <property type="entry name" value="Ketoacyl-synt_C"/>
    <property type="match status" value="1"/>
</dbReference>
<dbReference type="SMART" id="SM00825">
    <property type="entry name" value="PKS_KS"/>
    <property type="match status" value="1"/>
</dbReference>
<dbReference type="SUPFAM" id="SSF53901">
    <property type="entry name" value="Thiolase-like"/>
    <property type="match status" value="2"/>
</dbReference>
<dbReference type="PROSITE" id="PS00606">
    <property type="entry name" value="KS3_1"/>
    <property type="match status" value="1"/>
</dbReference>
<dbReference type="PROSITE" id="PS52004">
    <property type="entry name" value="KS3_2"/>
    <property type="match status" value="1"/>
</dbReference>
<accession>P06231</accession>
<geneLocation type="plasmid">
    <name>sym pRme41b</name>
</geneLocation>
<sequence length="401" mass="41667">MDRRVVITGMGGLCGLGTDTTSIWKWSARRRSAIGPVLNTELHGLKGIVGAEIKALPDHNIDRKQLVSMDRISVLAVIAAHEAMRQAGLSCNEGNALRFGATVGVGLGGWDATEKAYRPSLSTGGRTEIFTGVKAMPSAAACQVSMSLGLRGPVFGVTSACSSANHAIASAVDQIKCGRADVMLAGGSDAPLVWIVLKAWEAMRALAPDTCRPFSAGRKGVVLGEGAGMAVLESYEHATARGATILAEVAGVGLSADAFHITAPAVHGPESAMRACLADAGLNAEDVDYLNAHGTGTKANDQNETTAIKRVFGDHAYSMSISSTKSTHAHCIGAASALEMIACVMAIQEGVVPPTANYREPDPDCDLDVTPNVPRERKVRVAMSNAFAMGGTNAVLAFKQV</sequence>
<comment type="function">
    <text>Proposed to synthesize NOD factor fatty acyl chain. Involved in the synthesis of a highly unsaturated fatty acid moiety, which forms part of a lipo-oligosaccharide that is responsible for host specificity.</text>
</comment>
<comment type="subcellular location">
    <subcellularLocation>
        <location>Cell inner membrane</location>
    </subcellularLocation>
</comment>
<comment type="similarity">
    <text evidence="3">Belongs to the thiolase-like superfamily. Beta-ketoacyl-ACP synthases family.</text>
</comment>